<gene>
    <name type="primary">Acot9</name>
    <name type="synonym">Acate2</name>
</gene>
<dbReference type="EC" id="3.1.2.-" evidence="3 5"/>
<dbReference type="EC" id="3.1.2.2" evidence="5"/>
<dbReference type="EMBL" id="AJ238893">
    <property type="protein sequence ID" value="CAB45192.1"/>
    <property type="molecule type" value="mRNA"/>
</dbReference>
<dbReference type="EMBL" id="AB028898">
    <property type="protein sequence ID" value="BAA79193.1"/>
    <property type="molecule type" value="mRNA"/>
</dbReference>
<dbReference type="EMBL" id="AK002892">
    <property type="protein sequence ID" value="BAB22437.1"/>
    <property type="molecule type" value="mRNA"/>
</dbReference>
<dbReference type="EMBL" id="AK009717">
    <property type="protein sequence ID" value="BAB26460.1"/>
    <property type="molecule type" value="mRNA"/>
</dbReference>
<dbReference type="EMBL" id="AK168713">
    <property type="protein sequence ID" value="BAE40555.1"/>
    <property type="molecule type" value="mRNA"/>
</dbReference>
<dbReference type="EMBL" id="AK170876">
    <property type="protein sequence ID" value="BAE42086.1"/>
    <property type="molecule type" value="mRNA"/>
</dbReference>
<dbReference type="EMBL" id="BX005263">
    <property type="status" value="NOT_ANNOTATED_CDS"/>
    <property type="molecule type" value="Genomic_DNA"/>
</dbReference>
<dbReference type="EMBL" id="BX119978">
    <property type="status" value="NOT_ANNOTATED_CDS"/>
    <property type="molecule type" value="Genomic_DNA"/>
</dbReference>
<dbReference type="EMBL" id="BC021763">
    <property type="protein sequence ID" value="AAH21763.1"/>
    <property type="molecule type" value="mRNA"/>
</dbReference>
<dbReference type="CCDS" id="CCDS41187.1"/>
<dbReference type="RefSeq" id="NP_062710.2">
    <property type="nucleotide sequence ID" value="NM_019736.4"/>
</dbReference>
<dbReference type="SMR" id="Q9R0X4"/>
<dbReference type="BioGRID" id="207923">
    <property type="interactions" value="8"/>
</dbReference>
<dbReference type="FunCoup" id="Q9R0X4">
    <property type="interactions" value="1076"/>
</dbReference>
<dbReference type="IntAct" id="Q9R0X4">
    <property type="interactions" value="2"/>
</dbReference>
<dbReference type="MINT" id="Q9R0X4"/>
<dbReference type="STRING" id="10090.ENSMUSP00000026324"/>
<dbReference type="GlyGen" id="Q9R0X4">
    <property type="glycosylation" value="1 site, 1 O-linked glycan (1 site)"/>
</dbReference>
<dbReference type="iPTMnet" id="Q9R0X4"/>
<dbReference type="PhosphoSitePlus" id="Q9R0X4"/>
<dbReference type="SwissPalm" id="Q9R0X4"/>
<dbReference type="jPOST" id="Q9R0X4"/>
<dbReference type="PaxDb" id="10090-ENSMUSP00000026324"/>
<dbReference type="PeptideAtlas" id="Q9R0X4"/>
<dbReference type="ProteomicsDB" id="285655"/>
<dbReference type="Pumba" id="Q9R0X4"/>
<dbReference type="DNASU" id="56360"/>
<dbReference type="Ensembl" id="ENSMUST00000026324.10">
    <property type="protein sequence ID" value="ENSMUSP00000026324.10"/>
    <property type="gene ID" value="ENSMUSG00000025287.16"/>
</dbReference>
<dbReference type="GeneID" id="56360"/>
<dbReference type="KEGG" id="mmu:56360"/>
<dbReference type="UCSC" id="uc009urs.1">
    <property type="organism name" value="mouse"/>
</dbReference>
<dbReference type="AGR" id="MGI:1928939"/>
<dbReference type="CTD" id="23597"/>
<dbReference type="MGI" id="MGI:1928939">
    <property type="gene designation" value="Acot9"/>
</dbReference>
<dbReference type="VEuPathDB" id="HostDB:ENSMUSG00000025287"/>
<dbReference type="eggNOG" id="KOG2763">
    <property type="taxonomic scope" value="Eukaryota"/>
</dbReference>
<dbReference type="GeneTree" id="ENSGT00390000005330"/>
<dbReference type="HOGENOM" id="CLU_032862_2_1_1"/>
<dbReference type="InParanoid" id="Q9R0X4"/>
<dbReference type="OMA" id="QFNYTFL"/>
<dbReference type="OrthoDB" id="331699at2759"/>
<dbReference type="PhylomeDB" id="Q9R0X4"/>
<dbReference type="TreeFam" id="TF313352"/>
<dbReference type="BRENDA" id="3.1.2.2">
    <property type="organism ID" value="3474"/>
</dbReference>
<dbReference type="BRENDA" id="3.1.2.20">
    <property type="organism ID" value="3474"/>
</dbReference>
<dbReference type="Reactome" id="R-MMU-77289">
    <property type="pathway name" value="Mitochondrial Fatty Acid Beta-Oxidation"/>
</dbReference>
<dbReference type="UniPathway" id="UPA00199"/>
<dbReference type="BioGRID-ORCS" id="56360">
    <property type="hits" value="2 hits in 78 CRISPR screens"/>
</dbReference>
<dbReference type="ChiTaRS" id="Acot9">
    <property type="organism name" value="mouse"/>
</dbReference>
<dbReference type="PRO" id="PR:Q9R0X4"/>
<dbReference type="Proteomes" id="UP000000589">
    <property type="component" value="Chromosome X"/>
</dbReference>
<dbReference type="RNAct" id="Q9R0X4">
    <property type="molecule type" value="protein"/>
</dbReference>
<dbReference type="Bgee" id="ENSMUSG00000025287">
    <property type="expression patterns" value="Expressed in endothelial cell of lymphatic vessel and 249 other cell types or tissues"/>
</dbReference>
<dbReference type="ExpressionAtlas" id="Q9R0X4">
    <property type="expression patterns" value="baseline and differential"/>
</dbReference>
<dbReference type="GO" id="GO:0005743">
    <property type="term" value="C:mitochondrial inner membrane"/>
    <property type="evidence" value="ECO:0000314"/>
    <property type="project" value="UniProtKB"/>
</dbReference>
<dbReference type="GO" id="GO:0005759">
    <property type="term" value="C:mitochondrial matrix"/>
    <property type="evidence" value="ECO:0000314"/>
    <property type="project" value="UniProtKB"/>
</dbReference>
<dbReference type="GO" id="GO:0005739">
    <property type="term" value="C:mitochondrion"/>
    <property type="evidence" value="ECO:0000314"/>
    <property type="project" value="HGNC-UCL"/>
</dbReference>
<dbReference type="GO" id="GO:0003986">
    <property type="term" value="F:acetyl-CoA hydrolase activity"/>
    <property type="evidence" value="ECO:0000314"/>
    <property type="project" value="HGNC-UCL"/>
</dbReference>
<dbReference type="GO" id="GO:0052689">
    <property type="term" value="F:carboxylic ester hydrolase activity"/>
    <property type="evidence" value="ECO:0007669"/>
    <property type="project" value="UniProtKB-KW"/>
</dbReference>
<dbReference type="GO" id="GO:0047617">
    <property type="term" value="F:fatty acyl-CoA hydrolase activity"/>
    <property type="evidence" value="ECO:0000314"/>
    <property type="project" value="UniProtKB"/>
</dbReference>
<dbReference type="GO" id="GO:0052816">
    <property type="term" value="F:long-chain fatty acyl-CoA hydrolase activity"/>
    <property type="evidence" value="ECO:0000314"/>
    <property type="project" value="UniProtKB"/>
</dbReference>
<dbReference type="GO" id="GO:0006637">
    <property type="term" value="P:acyl-CoA metabolic process"/>
    <property type="evidence" value="ECO:0000314"/>
    <property type="project" value="HGNC-UCL"/>
</dbReference>
<dbReference type="GO" id="GO:0001676">
    <property type="term" value="P:long-chain fatty acid metabolic process"/>
    <property type="evidence" value="ECO:0000314"/>
    <property type="project" value="UniProtKB"/>
</dbReference>
<dbReference type="GO" id="GO:0046459">
    <property type="term" value="P:short-chain fatty acid metabolic process"/>
    <property type="evidence" value="ECO:0000314"/>
    <property type="project" value="UniProtKB"/>
</dbReference>
<dbReference type="CDD" id="cd03442">
    <property type="entry name" value="BFIT_BACH"/>
    <property type="match status" value="2"/>
</dbReference>
<dbReference type="FunFam" id="3.10.129.10:FF:000012">
    <property type="entry name" value="Acyl-coenzyme A thioesterase 9, mitochondrial"/>
    <property type="match status" value="1"/>
</dbReference>
<dbReference type="FunFam" id="3.10.129.10:FF:000016">
    <property type="entry name" value="Acyl-coenzyme A thioesterase 9, mitochondrial"/>
    <property type="match status" value="1"/>
</dbReference>
<dbReference type="Gene3D" id="3.10.129.10">
    <property type="entry name" value="Hotdog Thioesterase"/>
    <property type="match status" value="2"/>
</dbReference>
<dbReference type="InterPro" id="IPR033120">
    <property type="entry name" value="HOTDOG_ACOT"/>
</dbReference>
<dbReference type="InterPro" id="IPR029069">
    <property type="entry name" value="HotDog_dom_sf"/>
</dbReference>
<dbReference type="PANTHER" id="PTHR12655">
    <property type="entry name" value="ACYL-COA THIOESTERASE"/>
    <property type="match status" value="1"/>
</dbReference>
<dbReference type="PANTHER" id="PTHR12655:SF0">
    <property type="entry name" value="ACYL-COENZYME A THIOESTERASE 9, MITOCHONDRIAL"/>
    <property type="match status" value="1"/>
</dbReference>
<dbReference type="SUPFAM" id="SSF54637">
    <property type="entry name" value="Thioesterase/thiol ester dehydrase-isomerase"/>
    <property type="match status" value="2"/>
</dbReference>
<dbReference type="PROSITE" id="PS51770">
    <property type="entry name" value="HOTDOG_ACOT"/>
    <property type="match status" value="2"/>
</dbReference>
<proteinExistence type="evidence at protein level"/>
<organism>
    <name type="scientific">Mus musculus</name>
    <name type="common">Mouse</name>
    <dbReference type="NCBI Taxonomy" id="10090"/>
    <lineage>
        <taxon>Eukaryota</taxon>
        <taxon>Metazoa</taxon>
        <taxon>Chordata</taxon>
        <taxon>Craniata</taxon>
        <taxon>Vertebrata</taxon>
        <taxon>Euteleostomi</taxon>
        <taxon>Mammalia</taxon>
        <taxon>Eutheria</taxon>
        <taxon>Euarchontoglires</taxon>
        <taxon>Glires</taxon>
        <taxon>Rodentia</taxon>
        <taxon>Myomorpha</taxon>
        <taxon>Muroidea</taxon>
        <taxon>Muridae</taxon>
        <taxon>Murinae</taxon>
        <taxon>Mus</taxon>
        <taxon>Mus</taxon>
    </lineage>
</organism>
<keyword id="KW-0007">Acetylation</keyword>
<keyword id="KW-0903">Direct protein sequencing</keyword>
<keyword id="KW-0378">Hydrolase</keyword>
<keyword id="KW-0472">Membrane</keyword>
<keyword id="KW-0496">Mitochondrion</keyword>
<keyword id="KW-0999">Mitochondrion inner membrane</keyword>
<keyword id="KW-1185">Reference proteome</keyword>
<keyword id="KW-0677">Repeat</keyword>
<keyword id="KW-0719">Serine esterase</keyword>
<keyword id="KW-0809">Transit peptide</keyword>
<feature type="transit peptide" description="Mitochondrion" evidence="3">
    <location>
        <begin position="1"/>
        <end position="21"/>
    </location>
</feature>
<feature type="chain" id="PRO_0000000870" description="Acyl-coenzyme A thioesterase 9, mitochondrial">
    <location>
        <begin position="22"/>
        <end position="439"/>
    </location>
</feature>
<feature type="domain" description="HotDog ACOT-type 1" evidence="2">
    <location>
        <begin position="85"/>
        <end position="209"/>
    </location>
</feature>
<feature type="domain" description="HotDog ACOT-type 2" evidence="2">
    <location>
        <begin position="289"/>
        <end position="401"/>
    </location>
</feature>
<feature type="modified residue" description="N6-acetyllysine" evidence="1">
    <location>
        <position position="102"/>
    </location>
</feature>
<feature type="sequence conflict" description="In Ref. 2; BAA79193." evidence="9" ref="2">
    <original>LIPE</original>
    <variation>THSG</variation>
    <location>
        <begin position="219"/>
        <end position="222"/>
    </location>
</feature>
<accession>Q9R0X4</accession>
<accession>Q545G7</accession>
<accession>Q9WTJ0</accession>
<accession>Q9WUZ8</accession>
<sequence length="439" mass="50560">MKRAAIRLWTLNKGLLTHGRGLSQGSQYKISEPLHIHQVRDKLREIVGVSTVWRDHVKAMEERKLLHSFLPKSQKVLPPRKMRDSYIEVLLPLGTDPELRDKYVTVQNTVRFGRILEDLDSLGVLVCYMHNHNHSTKMSPLSIVTVLVDKIDMCKHSLSPEQDIKFTGHVSWVGNTSMEVKMKMFQLHNDEKYWPVLDATFVMVARDSENKGPAFVNPLIPENKEEEELFKQGELNKSRRIAFSTSSLLKVAPSSEERNIIHELFLTTLDPKTISFQSRILPPKAVWMEDTKLKSLDICHPQERNVFNRIFGGFLMRKAYELAWATACSFGGSRPYVVTVDDIMFQKPVEVGSLLFLSSQVCFTQDNYIQVRVHSEVSSLDSREHMTTNVFHFTFMSEKEVPLIFPKTYGESMLYLDGQRHFKSMSTPVTLKKDYPVEP</sequence>
<reference key="1">
    <citation type="journal article" date="1999" name="J. Biol. Chem.">
        <title>Molecular cloning and characterization of MT-ACT48, a novel mitochondrial acyl-CoA thioesterase.</title>
        <authorList>
            <person name="Poupon V."/>
            <person name="Begue B."/>
            <person name="Gagnon J."/>
            <person name="Dautry-Varsat A."/>
            <person name="Cerf-Bensussan N."/>
            <person name="Benmerah A."/>
        </authorList>
    </citation>
    <scope>NUCLEOTIDE SEQUENCE [MRNA]</scope>
    <scope>PROTEIN SEQUENCE OF 22-41</scope>
    <scope>SUBCELLULAR LOCATION</scope>
    <scope>FUNCTION</scope>
    <scope>CATALYTIC ACTIVITY</scope>
</reference>
<reference key="2">
    <citation type="submission" date="1999-06" db="EMBL/GenBank/DDBJ databases">
        <authorList>
            <person name="Ishizuka Y."/>
            <person name="Mochizuki R."/>
            <person name="Tohdoh N."/>
        </authorList>
    </citation>
    <scope>NUCLEOTIDE SEQUENCE [MRNA]</scope>
    <source>
        <strain>AKR/J</strain>
    </source>
</reference>
<reference key="3">
    <citation type="journal article" date="2005" name="Science">
        <title>The transcriptional landscape of the mammalian genome.</title>
        <authorList>
            <person name="Carninci P."/>
            <person name="Kasukawa T."/>
            <person name="Katayama S."/>
            <person name="Gough J."/>
            <person name="Frith M.C."/>
            <person name="Maeda N."/>
            <person name="Oyama R."/>
            <person name="Ravasi T."/>
            <person name="Lenhard B."/>
            <person name="Wells C."/>
            <person name="Kodzius R."/>
            <person name="Shimokawa K."/>
            <person name="Bajic V.B."/>
            <person name="Brenner S.E."/>
            <person name="Batalov S."/>
            <person name="Forrest A.R."/>
            <person name="Zavolan M."/>
            <person name="Davis M.J."/>
            <person name="Wilming L.G."/>
            <person name="Aidinis V."/>
            <person name="Allen J.E."/>
            <person name="Ambesi-Impiombato A."/>
            <person name="Apweiler R."/>
            <person name="Aturaliya R.N."/>
            <person name="Bailey T.L."/>
            <person name="Bansal M."/>
            <person name="Baxter L."/>
            <person name="Beisel K.W."/>
            <person name="Bersano T."/>
            <person name="Bono H."/>
            <person name="Chalk A.M."/>
            <person name="Chiu K.P."/>
            <person name="Choudhary V."/>
            <person name="Christoffels A."/>
            <person name="Clutterbuck D.R."/>
            <person name="Crowe M.L."/>
            <person name="Dalla E."/>
            <person name="Dalrymple B.P."/>
            <person name="de Bono B."/>
            <person name="Della Gatta G."/>
            <person name="di Bernardo D."/>
            <person name="Down T."/>
            <person name="Engstrom P."/>
            <person name="Fagiolini M."/>
            <person name="Faulkner G."/>
            <person name="Fletcher C.F."/>
            <person name="Fukushima T."/>
            <person name="Furuno M."/>
            <person name="Futaki S."/>
            <person name="Gariboldi M."/>
            <person name="Georgii-Hemming P."/>
            <person name="Gingeras T.R."/>
            <person name="Gojobori T."/>
            <person name="Green R.E."/>
            <person name="Gustincich S."/>
            <person name="Harbers M."/>
            <person name="Hayashi Y."/>
            <person name="Hensch T.K."/>
            <person name="Hirokawa N."/>
            <person name="Hill D."/>
            <person name="Huminiecki L."/>
            <person name="Iacono M."/>
            <person name="Ikeo K."/>
            <person name="Iwama A."/>
            <person name="Ishikawa T."/>
            <person name="Jakt M."/>
            <person name="Kanapin A."/>
            <person name="Katoh M."/>
            <person name="Kawasawa Y."/>
            <person name="Kelso J."/>
            <person name="Kitamura H."/>
            <person name="Kitano H."/>
            <person name="Kollias G."/>
            <person name="Krishnan S.P."/>
            <person name="Kruger A."/>
            <person name="Kummerfeld S.K."/>
            <person name="Kurochkin I.V."/>
            <person name="Lareau L.F."/>
            <person name="Lazarevic D."/>
            <person name="Lipovich L."/>
            <person name="Liu J."/>
            <person name="Liuni S."/>
            <person name="McWilliam S."/>
            <person name="Madan Babu M."/>
            <person name="Madera M."/>
            <person name="Marchionni L."/>
            <person name="Matsuda H."/>
            <person name="Matsuzawa S."/>
            <person name="Miki H."/>
            <person name="Mignone F."/>
            <person name="Miyake S."/>
            <person name="Morris K."/>
            <person name="Mottagui-Tabar S."/>
            <person name="Mulder N."/>
            <person name="Nakano N."/>
            <person name="Nakauchi H."/>
            <person name="Ng P."/>
            <person name="Nilsson R."/>
            <person name="Nishiguchi S."/>
            <person name="Nishikawa S."/>
            <person name="Nori F."/>
            <person name="Ohara O."/>
            <person name="Okazaki Y."/>
            <person name="Orlando V."/>
            <person name="Pang K.C."/>
            <person name="Pavan W.J."/>
            <person name="Pavesi G."/>
            <person name="Pesole G."/>
            <person name="Petrovsky N."/>
            <person name="Piazza S."/>
            <person name="Reed J."/>
            <person name="Reid J.F."/>
            <person name="Ring B.Z."/>
            <person name="Ringwald M."/>
            <person name="Rost B."/>
            <person name="Ruan Y."/>
            <person name="Salzberg S.L."/>
            <person name="Sandelin A."/>
            <person name="Schneider C."/>
            <person name="Schoenbach C."/>
            <person name="Sekiguchi K."/>
            <person name="Semple C.A."/>
            <person name="Seno S."/>
            <person name="Sessa L."/>
            <person name="Sheng Y."/>
            <person name="Shibata Y."/>
            <person name="Shimada H."/>
            <person name="Shimada K."/>
            <person name="Silva D."/>
            <person name="Sinclair B."/>
            <person name="Sperling S."/>
            <person name="Stupka E."/>
            <person name="Sugiura K."/>
            <person name="Sultana R."/>
            <person name="Takenaka Y."/>
            <person name="Taki K."/>
            <person name="Tammoja K."/>
            <person name="Tan S.L."/>
            <person name="Tang S."/>
            <person name="Taylor M.S."/>
            <person name="Tegner J."/>
            <person name="Teichmann S.A."/>
            <person name="Ueda H.R."/>
            <person name="van Nimwegen E."/>
            <person name="Verardo R."/>
            <person name="Wei C.L."/>
            <person name="Yagi K."/>
            <person name="Yamanishi H."/>
            <person name="Zabarovsky E."/>
            <person name="Zhu S."/>
            <person name="Zimmer A."/>
            <person name="Hide W."/>
            <person name="Bult C."/>
            <person name="Grimmond S.M."/>
            <person name="Teasdale R.D."/>
            <person name="Liu E.T."/>
            <person name="Brusic V."/>
            <person name="Quackenbush J."/>
            <person name="Wahlestedt C."/>
            <person name="Mattick J.S."/>
            <person name="Hume D.A."/>
            <person name="Kai C."/>
            <person name="Sasaki D."/>
            <person name="Tomaru Y."/>
            <person name="Fukuda S."/>
            <person name="Kanamori-Katayama M."/>
            <person name="Suzuki M."/>
            <person name="Aoki J."/>
            <person name="Arakawa T."/>
            <person name="Iida J."/>
            <person name="Imamura K."/>
            <person name="Itoh M."/>
            <person name="Kato T."/>
            <person name="Kawaji H."/>
            <person name="Kawagashira N."/>
            <person name="Kawashima T."/>
            <person name="Kojima M."/>
            <person name="Kondo S."/>
            <person name="Konno H."/>
            <person name="Nakano K."/>
            <person name="Ninomiya N."/>
            <person name="Nishio T."/>
            <person name="Okada M."/>
            <person name="Plessy C."/>
            <person name="Shibata K."/>
            <person name="Shiraki T."/>
            <person name="Suzuki S."/>
            <person name="Tagami M."/>
            <person name="Waki K."/>
            <person name="Watahiki A."/>
            <person name="Okamura-Oho Y."/>
            <person name="Suzuki H."/>
            <person name="Kawai J."/>
            <person name="Hayashizaki Y."/>
        </authorList>
    </citation>
    <scope>NUCLEOTIDE SEQUENCE [LARGE SCALE MRNA]</scope>
    <source>
        <strain>C57BL/6J</strain>
        <strain>NOD</strain>
        <tissue>Dendritic cell</tissue>
        <tissue>Embryonic kidney</tissue>
        <tissue>Kidney</tissue>
        <tissue>Tongue</tissue>
    </source>
</reference>
<reference key="4">
    <citation type="journal article" date="2009" name="PLoS Biol.">
        <title>Lineage-specific biology revealed by a finished genome assembly of the mouse.</title>
        <authorList>
            <person name="Church D.M."/>
            <person name="Goodstadt L."/>
            <person name="Hillier L.W."/>
            <person name="Zody M.C."/>
            <person name="Goldstein S."/>
            <person name="She X."/>
            <person name="Bult C.J."/>
            <person name="Agarwala R."/>
            <person name="Cherry J.L."/>
            <person name="DiCuccio M."/>
            <person name="Hlavina W."/>
            <person name="Kapustin Y."/>
            <person name="Meric P."/>
            <person name="Maglott D."/>
            <person name="Birtle Z."/>
            <person name="Marques A.C."/>
            <person name="Graves T."/>
            <person name="Zhou S."/>
            <person name="Teague B."/>
            <person name="Potamousis K."/>
            <person name="Churas C."/>
            <person name="Place M."/>
            <person name="Herschleb J."/>
            <person name="Runnheim R."/>
            <person name="Forrest D."/>
            <person name="Amos-Landgraf J."/>
            <person name="Schwartz D.C."/>
            <person name="Cheng Z."/>
            <person name="Lindblad-Toh K."/>
            <person name="Eichler E.E."/>
            <person name="Ponting C.P."/>
        </authorList>
    </citation>
    <scope>NUCLEOTIDE SEQUENCE [LARGE SCALE GENOMIC DNA]</scope>
    <source>
        <strain>C57BL/6J</strain>
    </source>
</reference>
<reference key="5">
    <citation type="journal article" date="2004" name="Genome Res.">
        <title>The status, quality, and expansion of the NIH full-length cDNA project: the Mammalian Gene Collection (MGC).</title>
        <authorList>
            <consortium name="The MGC Project Team"/>
        </authorList>
    </citation>
    <scope>NUCLEOTIDE SEQUENCE [LARGE SCALE MRNA]</scope>
    <source>
        <strain>FVB/N</strain>
        <tissue>Mammary gland</tissue>
    </source>
</reference>
<reference key="6">
    <citation type="journal article" date="2010" name="Cell">
        <title>A tissue-specific atlas of mouse protein phosphorylation and expression.</title>
        <authorList>
            <person name="Huttlin E.L."/>
            <person name="Jedrychowski M.P."/>
            <person name="Elias J.E."/>
            <person name="Goswami T."/>
            <person name="Rad R."/>
            <person name="Beausoleil S.A."/>
            <person name="Villen J."/>
            <person name="Haas W."/>
            <person name="Sowa M.E."/>
            <person name="Gygi S.P."/>
        </authorList>
    </citation>
    <scope>IDENTIFICATION BY MASS SPECTROMETRY [LARGE SCALE ANALYSIS]</scope>
    <source>
        <tissue>Brain</tissue>
        <tissue>Brown adipose tissue</tissue>
        <tissue>Heart</tissue>
        <tissue>Kidney</tissue>
        <tissue>Lung</tissue>
        <tissue>Pancreas</tissue>
        <tissue>Spleen</tissue>
        <tissue>Testis</tissue>
    </source>
</reference>
<reference key="7">
    <citation type="journal article" date="2011" name="EMBO J.">
        <title>NYAP: a phosphoprotein family that links PI3K to WAVE1 signalling in neurons.</title>
        <authorList>
            <person name="Yokoyama K."/>
            <person name="Tezuka T."/>
            <person name="Kotani M."/>
            <person name="Nakazawa T."/>
            <person name="Hoshina N."/>
            <person name="Shimoda Y."/>
            <person name="Kakuta S."/>
            <person name="Sudo K."/>
            <person name="Watanabe K."/>
            <person name="Iwakura Y."/>
            <person name="Yamamoto T."/>
        </authorList>
    </citation>
    <scope>INTERACTION WITH NYAP1; NYAP2 AND MYO16</scope>
</reference>
<reference key="8">
    <citation type="journal article" date="2014" name="Cell. Mol. Life Sci.">
        <title>Acyl-CoA thioesterase 9 (ACOT9) in mouse may provide a novel link between fatty acid and amino acid metabolism in mitochondria.</title>
        <authorList>
            <person name="Tillander V."/>
            <person name="Arvidsson Nordstroem E."/>
            <person name="Reilly J."/>
            <person name="Strozyk M."/>
            <person name="Van Veldhoven P.P."/>
            <person name="Hunt M.C."/>
            <person name="Alexson S.E."/>
        </authorList>
    </citation>
    <scope>FUNCTION</scope>
    <scope>CATALYTIC ACTIVITY</scope>
    <scope>BIOPHYSICOCHEMICAL PROPERTIES</scope>
    <scope>SUBSTRATE SPECIFICITY</scope>
    <scope>ACTIVITY REGULATION</scope>
    <scope>TISSUE SPECIFICITY</scope>
</reference>
<reference key="9">
    <citation type="journal article" date="2019" name="J. Biol. Chem.">
        <title>Multiple mitochondrial thioesterases have distinct tissue and substrate specificity and CoA regulation, suggesting unique functional roles.</title>
        <authorList>
            <person name="Bekeova C."/>
            <person name="Anderson-Pullinger L."/>
            <person name="Boye K."/>
            <person name="Boos F."/>
            <person name="Sharpadskaya Y."/>
            <person name="Herrmann J.M."/>
            <person name="Seifert E.L."/>
        </authorList>
    </citation>
    <scope>SUBCELLULAR LOCATION</scope>
    <scope>FUNCTION</scope>
</reference>
<reference key="10">
    <citation type="journal article" date="2020" name="Hepatology">
        <title>Acyl-Coenzyme A Thioesterase 9 Traffics Mitochondrial Short-Chain Fatty Acids Toward De Novo Lipogenesis and Glucose Production in the Liver.</title>
        <authorList>
            <person name="Steensels S."/>
            <person name="Qiao J."/>
            <person name="Zhang Y."/>
            <person name="Maner-Smith K.M."/>
            <person name="Kika N."/>
            <person name="Holman C.D."/>
            <person name="Corey K.E."/>
            <person name="Bracken W.C."/>
            <person name="Ortlund E.A."/>
            <person name="Ersoy B.A."/>
        </authorList>
    </citation>
    <scope>FUNCTION</scope>
    <scope>DISRUPTION PHENOTYPE</scope>
    <scope>INDUCTION</scope>
    <scope>SUBCELLULAR LOCATION</scope>
</reference>
<comment type="function">
    <text evidence="3 5 6 7">Mitochondrial acyl-CoA thioesterase. Catalyzes the hydrolysis of acyl-CoAs into free fatty acids and coenzyme A (CoA), regulating their respective intracellular levels (PubMed:10383425, PubMed:23864032). Shows a clear preference for hydrophobic short-, medium-, and long-chain saturated acyl-CoAs with some activity also with short-chain dicarboxylic CoA esters (PubMed:10383425, PubMed:23864032). Regulates both mitochondrial lipid and amino acid metabolism (PubMed:23864032, PubMed:31676684, PubMed:32498134).</text>
</comment>
<comment type="catalytic activity">
    <reaction evidence="5">
        <text>butanoyl-CoA + H2O = butanoate + CoA + H(+)</text>
        <dbReference type="Rhea" id="RHEA:40111"/>
        <dbReference type="ChEBI" id="CHEBI:15377"/>
        <dbReference type="ChEBI" id="CHEBI:15378"/>
        <dbReference type="ChEBI" id="CHEBI:17968"/>
        <dbReference type="ChEBI" id="CHEBI:57287"/>
        <dbReference type="ChEBI" id="CHEBI:57371"/>
    </reaction>
    <physiologicalReaction direction="left-to-right" evidence="11">
        <dbReference type="Rhea" id="RHEA:40112"/>
    </physiologicalReaction>
</comment>
<comment type="catalytic activity">
    <reaction evidence="5">
        <text>propanoyl-CoA + H2O = propanoate + CoA + H(+)</text>
        <dbReference type="Rhea" id="RHEA:40103"/>
        <dbReference type="ChEBI" id="CHEBI:15377"/>
        <dbReference type="ChEBI" id="CHEBI:15378"/>
        <dbReference type="ChEBI" id="CHEBI:17272"/>
        <dbReference type="ChEBI" id="CHEBI:57287"/>
        <dbReference type="ChEBI" id="CHEBI:57392"/>
    </reaction>
    <physiologicalReaction direction="left-to-right" evidence="11">
        <dbReference type="Rhea" id="RHEA:40104"/>
    </physiologicalReaction>
</comment>
<comment type="catalytic activity">
    <reaction evidence="5">
        <text>hexadecanoyl-CoA + H2O = hexadecanoate + CoA + H(+)</text>
        <dbReference type="Rhea" id="RHEA:16645"/>
        <dbReference type="ChEBI" id="CHEBI:7896"/>
        <dbReference type="ChEBI" id="CHEBI:15377"/>
        <dbReference type="ChEBI" id="CHEBI:15378"/>
        <dbReference type="ChEBI" id="CHEBI:57287"/>
        <dbReference type="ChEBI" id="CHEBI:57379"/>
        <dbReference type="EC" id="3.1.2.2"/>
    </reaction>
    <physiologicalReaction direction="left-to-right" evidence="11">
        <dbReference type="Rhea" id="RHEA:16646"/>
    </physiologicalReaction>
</comment>
<comment type="catalytic activity">
    <reaction evidence="5">
        <text>octanoyl-CoA + H2O = octanoate + CoA + H(+)</text>
        <dbReference type="Rhea" id="RHEA:30143"/>
        <dbReference type="ChEBI" id="CHEBI:15377"/>
        <dbReference type="ChEBI" id="CHEBI:15378"/>
        <dbReference type="ChEBI" id="CHEBI:25646"/>
        <dbReference type="ChEBI" id="CHEBI:57287"/>
        <dbReference type="ChEBI" id="CHEBI:57386"/>
    </reaction>
    <physiologicalReaction direction="left-to-right" evidence="11">
        <dbReference type="Rhea" id="RHEA:30144"/>
    </physiologicalReaction>
</comment>
<comment type="catalytic activity">
    <reaction evidence="5">
        <text>decanoyl-CoA + H2O = decanoate + CoA + H(+)</text>
        <dbReference type="Rhea" id="RHEA:40059"/>
        <dbReference type="ChEBI" id="CHEBI:15377"/>
        <dbReference type="ChEBI" id="CHEBI:15378"/>
        <dbReference type="ChEBI" id="CHEBI:27689"/>
        <dbReference type="ChEBI" id="CHEBI:57287"/>
        <dbReference type="ChEBI" id="CHEBI:61430"/>
    </reaction>
    <physiologicalReaction direction="left-to-right" evidence="11">
        <dbReference type="Rhea" id="RHEA:40060"/>
    </physiologicalReaction>
</comment>
<comment type="catalytic activity">
    <reaction evidence="3 5">
        <text>tetradecanoyl-CoA + H2O = tetradecanoate + CoA + H(+)</text>
        <dbReference type="Rhea" id="RHEA:40119"/>
        <dbReference type="ChEBI" id="CHEBI:15377"/>
        <dbReference type="ChEBI" id="CHEBI:15378"/>
        <dbReference type="ChEBI" id="CHEBI:30807"/>
        <dbReference type="ChEBI" id="CHEBI:57287"/>
        <dbReference type="ChEBI" id="CHEBI:57385"/>
    </reaction>
    <physiologicalReaction direction="left-to-right" evidence="11">
        <dbReference type="Rhea" id="RHEA:40120"/>
    </physiologicalReaction>
</comment>
<comment type="catalytic activity">
    <reaction evidence="5">
        <text>4,8-dimethylnonanoyl-CoA + H2O = 4,8-dimethylnonanoate + CoA + H(+)</text>
        <dbReference type="Rhea" id="RHEA:40223"/>
        <dbReference type="ChEBI" id="CHEBI:15377"/>
        <dbReference type="ChEBI" id="CHEBI:15378"/>
        <dbReference type="ChEBI" id="CHEBI:57287"/>
        <dbReference type="ChEBI" id="CHEBI:77061"/>
        <dbReference type="ChEBI" id="CHEBI:77063"/>
    </reaction>
    <physiologicalReaction direction="left-to-right" evidence="11">
        <dbReference type="Rhea" id="RHEA:40224"/>
    </physiologicalReaction>
</comment>
<comment type="catalytic activity">
    <reaction evidence="5">
        <text>3-methylbutanoyl-CoA + H2O = 3-methylbutanoate + CoA + H(+)</text>
        <dbReference type="Rhea" id="RHEA:66984"/>
        <dbReference type="ChEBI" id="CHEBI:15377"/>
        <dbReference type="ChEBI" id="CHEBI:15378"/>
        <dbReference type="ChEBI" id="CHEBI:48942"/>
        <dbReference type="ChEBI" id="CHEBI:57287"/>
        <dbReference type="ChEBI" id="CHEBI:57345"/>
    </reaction>
    <physiologicalReaction direction="left-to-right" evidence="11">
        <dbReference type="Rhea" id="RHEA:66985"/>
    </physiologicalReaction>
</comment>
<comment type="catalytic activity">
    <reaction evidence="5">
        <text>2-methylpropanoyl-CoA + H2O = 2-methylpropanoate + CoA + H(+)</text>
        <dbReference type="Rhea" id="RHEA:40799"/>
        <dbReference type="ChEBI" id="CHEBI:15377"/>
        <dbReference type="ChEBI" id="CHEBI:15378"/>
        <dbReference type="ChEBI" id="CHEBI:48944"/>
        <dbReference type="ChEBI" id="CHEBI:57287"/>
        <dbReference type="ChEBI" id="CHEBI:57338"/>
    </reaction>
    <physiologicalReaction direction="left-to-right" evidence="11">
        <dbReference type="Rhea" id="RHEA:40800"/>
    </physiologicalReaction>
</comment>
<comment type="activity regulation">
    <text evidence="5">Strongly inhibited by NADH and CoA.</text>
</comment>
<comment type="biophysicochemical properties">
    <kinetics>
        <KM evidence="5">35.4 uM for propanoyl-CoA</KM>
        <KM evidence="5">27.3 uM for butanoyl-CoA</KM>
        <KM evidence="5">15.1 uM for pentanoyl-CoA</KM>
        <KM evidence="5">17.4 uM for octanoyl-CoA</KM>
        <KM evidence="5">19.9 uM for decanoyl-CoA</KM>
        <KM evidence="5">7.8 uM for tetradecanoyl-CoA</KM>
        <KM evidence="5">3.1 uM for hexadecanoyl-CoA</KM>
        <KM evidence="5">7.2 uM for 4,8-dimethylnonanoyl-CoA</KM>
        <KM evidence="5">30.8 uM for 2-methylpropanoyl-CoA</KM>
        <KM evidence="5">14.2 uM for 3-methylbutanoyl-CoA</KM>
        <Vmax evidence="5">49.7 umol/min/mg enzyme with propanoyl-CoA as substrate</Vmax>
        <Vmax evidence="5">16.6 umol/min/mg enzyme with pentanoyl-CoA as substrate</Vmax>
        <Vmax evidence="5">38.1 umol/min/mg enzyme with decanoyl-CoA as substrate</Vmax>
        <Vmax evidence="5">26.5 umol/min/mg enzyme with tetradecanoyl-CoA as substrate</Vmax>
        <Vmax evidence="5">8.4 umol/min/mg enzyme with hexadecanoyl-CoA as substrate</Vmax>
        <Vmax evidence="5">34.6 umol/min/mg enzyme with octanoyl-CoA as substrate</Vmax>
        <Vmax evidence="5">15.0 umol/min/mg enzyme with 3-methylbutanoyl-CoA as substrate</Vmax>
        <Vmax evidence="5">31.9 umol/min/mg enzyme with 2-methylpropanoyl-CoA as substrate</Vmax>
        <Vmax evidence="5">12.4 umol/min/mg enzyme with 4,8-dimethylnonanoyl-CoA as substrate</Vmax>
    </kinetics>
</comment>
<comment type="pathway">
    <text evidence="5">Lipid metabolism; fatty acid metabolism.</text>
</comment>
<comment type="subunit">
    <text evidence="4">Interacts with NYAP1, NYAP2 and MYO16.</text>
</comment>
<comment type="subcellular location">
    <subcellularLocation>
        <location evidence="10">Mitochondrion</location>
    </subcellularLocation>
    <subcellularLocation>
        <location evidence="6">Mitochondrion matrix</location>
    </subcellularLocation>
    <subcellularLocation>
        <location evidence="7">Mitochondrion inner membrane</location>
    </subcellularLocation>
</comment>
<comment type="tissue specificity">
    <text evidence="5">Widely expressed.</text>
</comment>
<comment type="induction">
    <text evidence="7">Expression increases by more than 2-fold following induction of nonalcoholic fatty liver disease (NAFLD) by either high-fat diet (HFD) or genetic ablation of leptin expression.</text>
</comment>
<comment type="disruption phenotype">
    <text evidence="7">At the age of weaning, deficient mice do not exhibit any discernible physical or developmental abnormalities. However, in case of excessive nutrition, deficient mice are protected mice against increases in weight gain, excessive hepatic glucose production, steatosis and steatohepatitis.</text>
</comment>
<comment type="similarity">
    <text evidence="9">Belongs to the acyl coenzyme A hydrolase family.</text>
</comment>
<evidence type="ECO:0000250" key="1">
    <source>
        <dbReference type="UniProtKB" id="Q9Y305"/>
    </source>
</evidence>
<evidence type="ECO:0000255" key="2">
    <source>
        <dbReference type="PROSITE-ProRule" id="PRU01106"/>
    </source>
</evidence>
<evidence type="ECO:0000269" key="3">
    <source>
    </source>
</evidence>
<evidence type="ECO:0000269" key="4">
    <source>
    </source>
</evidence>
<evidence type="ECO:0000269" key="5">
    <source>
    </source>
</evidence>
<evidence type="ECO:0000269" key="6">
    <source>
    </source>
</evidence>
<evidence type="ECO:0000269" key="7">
    <source>
    </source>
</evidence>
<evidence type="ECO:0000303" key="8">
    <source>
    </source>
</evidence>
<evidence type="ECO:0000305" key="9"/>
<evidence type="ECO:0000305" key="10">
    <source>
    </source>
</evidence>
<evidence type="ECO:0000305" key="11">
    <source>
    </source>
</evidence>
<name>ACOT9_MOUSE</name>
<protein>
    <recommendedName>
        <fullName>Acyl-coenzyme A thioesterase 9, mitochondrial</fullName>
        <shortName>Acyl-CoA thioesterase 9</shortName>
        <ecNumber evidence="3 5">3.1.2.-</ecNumber>
        <ecNumber evidence="5">3.1.2.2</ecNumber>
    </recommendedName>
    <alternativeName>
        <fullName>Acyl coenzyme A thioester hydrolase 2</fullName>
        <shortName>MTE-2</shortName>
    </alternativeName>
    <alternativeName>
        <fullName>Acyl-CoA thioester hydrolase 9</fullName>
    </alternativeName>
    <alternativeName>
        <fullName evidence="8">Mitochondrial 48 kDa acyl-CoA thioester hydrolase 1</fullName>
        <shortName evidence="8">MT-ACT48.1</shortName>
    </alternativeName>
    <alternativeName>
        <fullName>Protein U8</fullName>
    </alternativeName>
    <alternativeName>
        <fullName>p48</fullName>
    </alternativeName>
</protein>